<comment type="function">
    <text evidence="1">Accelerates the degradation of transcripts by removing pyrophosphate from the 5'-end of triphosphorylated RNA, leading to a more labile monophosphorylated state that can stimulate subsequent ribonuclease cleavage.</text>
</comment>
<comment type="cofactor">
    <cofactor evidence="1">
        <name>a divalent metal cation</name>
        <dbReference type="ChEBI" id="CHEBI:60240"/>
    </cofactor>
</comment>
<comment type="similarity">
    <text evidence="1">Belongs to the Nudix hydrolase family. RppH subfamily.</text>
</comment>
<gene>
    <name evidence="1" type="primary">rppH</name>
    <name evidence="1" type="synonym">nudH</name>
    <name type="ordered locus">Spea_1021</name>
</gene>
<dbReference type="EC" id="3.6.1.-" evidence="1"/>
<dbReference type="EMBL" id="CP000851">
    <property type="protein sequence ID" value="ABV86348.1"/>
    <property type="molecule type" value="Genomic_DNA"/>
</dbReference>
<dbReference type="RefSeq" id="WP_012154279.1">
    <property type="nucleotide sequence ID" value="NC_009901.1"/>
</dbReference>
<dbReference type="SMR" id="A8H1B1"/>
<dbReference type="STRING" id="398579.Spea_1021"/>
<dbReference type="KEGG" id="spl:Spea_1021"/>
<dbReference type="eggNOG" id="COG0494">
    <property type="taxonomic scope" value="Bacteria"/>
</dbReference>
<dbReference type="HOGENOM" id="CLU_087195_3_1_6"/>
<dbReference type="OrthoDB" id="9816040at2"/>
<dbReference type="Proteomes" id="UP000002608">
    <property type="component" value="Chromosome"/>
</dbReference>
<dbReference type="GO" id="GO:0005737">
    <property type="term" value="C:cytoplasm"/>
    <property type="evidence" value="ECO:0007669"/>
    <property type="project" value="TreeGrafter"/>
</dbReference>
<dbReference type="GO" id="GO:0034353">
    <property type="term" value="F:mRNA 5'-diphosphatase activity"/>
    <property type="evidence" value="ECO:0007669"/>
    <property type="project" value="TreeGrafter"/>
</dbReference>
<dbReference type="GO" id="GO:0006402">
    <property type="term" value="P:mRNA catabolic process"/>
    <property type="evidence" value="ECO:0007669"/>
    <property type="project" value="TreeGrafter"/>
</dbReference>
<dbReference type="CDD" id="cd03671">
    <property type="entry name" value="NUDIX_Ap4A_hydrolase_plant_like"/>
    <property type="match status" value="1"/>
</dbReference>
<dbReference type="FunFam" id="3.90.79.10:FF:000001">
    <property type="entry name" value="RNA pyrophosphohydrolase"/>
    <property type="match status" value="1"/>
</dbReference>
<dbReference type="Gene3D" id="3.90.79.10">
    <property type="entry name" value="Nucleoside Triphosphate Pyrophosphohydrolase"/>
    <property type="match status" value="1"/>
</dbReference>
<dbReference type="HAMAP" id="MF_00298">
    <property type="entry name" value="Nudix_RppH"/>
    <property type="match status" value="1"/>
</dbReference>
<dbReference type="InterPro" id="IPR020476">
    <property type="entry name" value="Nudix_hydrolase"/>
</dbReference>
<dbReference type="InterPro" id="IPR015797">
    <property type="entry name" value="NUDIX_hydrolase-like_dom_sf"/>
</dbReference>
<dbReference type="InterPro" id="IPR020084">
    <property type="entry name" value="NUDIX_hydrolase_CS"/>
</dbReference>
<dbReference type="InterPro" id="IPR000086">
    <property type="entry name" value="NUDIX_hydrolase_dom"/>
</dbReference>
<dbReference type="InterPro" id="IPR022927">
    <property type="entry name" value="RppH"/>
</dbReference>
<dbReference type="NCBIfam" id="NF001934">
    <property type="entry name" value="PRK00714.1-1"/>
    <property type="match status" value="1"/>
</dbReference>
<dbReference type="NCBIfam" id="NF001937">
    <property type="entry name" value="PRK00714.1-4"/>
    <property type="match status" value="1"/>
</dbReference>
<dbReference type="NCBIfam" id="NF001938">
    <property type="entry name" value="PRK00714.1-5"/>
    <property type="match status" value="1"/>
</dbReference>
<dbReference type="PANTHER" id="PTHR23114">
    <property type="entry name" value="M7GPPPN-MRNA HYDROLASE"/>
    <property type="match status" value="1"/>
</dbReference>
<dbReference type="PANTHER" id="PTHR23114:SF17">
    <property type="entry name" value="M7GPPPN-MRNA HYDROLASE"/>
    <property type="match status" value="1"/>
</dbReference>
<dbReference type="Pfam" id="PF00293">
    <property type="entry name" value="NUDIX"/>
    <property type="match status" value="1"/>
</dbReference>
<dbReference type="PRINTS" id="PR00502">
    <property type="entry name" value="NUDIXFAMILY"/>
</dbReference>
<dbReference type="SUPFAM" id="SSF55811">
    <property type="entry name" value="Nudix"/>
    <property type="match status" value="1"/>
</dbReference>
<dbReference type="PROSITE" id="PS51462">
    <property type="entry name" value="NUDIX"/>
    <property type="match status" value="1"/>
</dbReference>
<dbReference type="PROSITE" id="PS00893">
    <property type="entry name" value="NUDIX_BOX"/>
    <property type="match status" value="1"/>
</dbReference>
<feature type="chain" id="PRO_1000078978" description="RNA pyrophosphohydrolase">
    <location>
        <begin position="1"/>
        <end position="173"/>
    </location>
</feature>
<feature type="domain" description="Nudix hydrolase" evidence="1">
    <location>
        <begin position="6"/>
        <end position="149"/>
    </location>
</feature>
<feature type="short sequence motif" description="Nudix box">
    <location>
        <begin position="38"/>
        <end position="59"/>
    </location>
</feature>
<proteinExistence type="inferred from homology"/>
<evidence type="ECO:0000255" key="1">
    <source>
        <dbReference type="HAMAP-Rule" id="MF_00298"/>
    </source>
</evidence>
<sequence>MIDSDGFRANVGIIICNRFGQVMWARRFGQHSWQFPQGGVDDGESAEEAMYRELYEEVGLKPEHVQILTSTRSWLRYRLPKRLIRQDSKPVCIGQKQKWFLLQLKSAETAIDLNASGHPEFDDWRWVSYWYPVRQVVSFKRDVYRKVMKEFAVTTLPLQVKESNNRRRGMRRS</sequence>
<keyword id="KW-0378">Hydrolase</keyword>
<keyword id="KW-1185">Reference proteome</keyword>
<accession>A8H1B1</accession>
<protein>
    <recommendedName>
        <fullName evidence="1">RNA pyrophosphohydrolase</fullName>
        <ecNumber evidence="1">3.6.1.-</ecNumber>
    </recommendedName>
    <alternativeName>
        <fullName evidence="1">(Di)nucleoside polyphosphate hydrolase</fullName>
    </alternativeName>
</protein>
<reference key="1">
    <citation type="submission" date="2007-10" db="EMBL/GenBank/DDBJ databases">
        <title>Complete sequence of Shewanella pealeana ATCC 700345.</title>
        <authorList>
            <consortium name="US DOE Joint Genome Institute"/>
            <person name="Copeland A."/>
            <person name="Lucas S."/>
            <person name="Lapidus A."/>
            <person name="Barry K."/>
            <person name="Glavina del Rio T."/>
            <person name="Dalin E."/>
            <person name="Tice H."/>
            <person name="Pitluck S."/>
            <person name="Chertkov O."/>
            <person name="Brettin T."/>
            <person name="Bruce D."/>
            <person name="Detter J.C."/>
            <person name="Han C."/>
            <person name="Schmutz J."/>
            <person name="Larimer F."/>
            <person name="Land M."/>
            <person name="Hauser L."/>
            <person name="Kyrpides N."/>
            <person name="Kim E."/>
            <person name="Zhao J.-S.Z."/>
            <person name="Manno D."/>
            <person name="Hawari J."/>
            <person name="Richardson P."/>
        </authorList>
    </citation>
    <scope>NUCLEOTIDE SEQUENCE [LARGE SCALE GENOMIC DNA]</scope>
    <source>
        <strain>ATCC 700345 / ANG-SQ1</strain>
    </source>
</reference>
<organism>
    <name type="scientific">Shewanella pealeana (strain ATCC 700345 / ANG-SQ1)</name>
    <dbReference type="NCBI Taxonomy" id="398579"/>
    <lineage>
        <taxon>Bacteria</taxon>
        <taxon>Pseudomonadati</taxon>
        <taxon>Pseudomonadota</taxon>
        <taxon>Gammaproteobacteria</taxon>
        <taxon>Alteromonadales</taxon>
        <taxon>Shewanellaceae</taxon>
        <taxon>Shewanella</taxon>
    </lineage>
</organism>
<name>RPPH_SHEPA</name>